<protein>
    <recommendedName>
        <fullName>Transcriptional regulator MraZ</fullName>
    </recommendedName>
</protein>
<accession>P75467</accession>
<dbReference type="EMBL" id="U00089">
    <property type="protein sequence ID" value="AAB96170.1"/>
    <property type="molecule type" value="Genomic_DNA"/>
</dbReference>
<dbReference type="PIR" id="S73848">
    <property type="entry name" value="S73848"/>
</dbReference>
<dbReference type="RefSeq" id="NP_110002.1">
    <property type="nucleotide sequence ID" value="NC_000912.1"/>
</dbReference>
<dbReference type="RefSeq" id="WP_010874670.1">
    <property type="nucleotide sequence ID" value="NZ_OU342337.1"/>
</dbReference>
<dbReference type="PDB" id="1N0E">
    <property type="method" value="X-ray"/>
    <property type="resolution" value="2.70 A"/>
    <property type="chains" value="A/B/C/D/E/F/G/H=1-141"/>
</dbReference>
<dbReference type="PDB" id="1N0F">
    <property type="method" value="X-ray"/>
    <property type="resolution" value="2.80 A"/>
    <property type="chains" value="A/B/C/D/E/F/G/H=1-141"/>
</dbReference>
<dbReference type="PDB" id="1N0G">
    <property type="method" value="X-ray"/>
    <property type="resolution" value="2.80 A"/>
    <property type="chains" value="A/B=1-141"/>
</dbReference>
<dbReference type="PDBsum" id="1N0E"/>
<dbReference type="PDBsum" id="1N0F"/>
<dbReference type="PDBsum" id="1N0G"/>
<dbReference type="SMR" id="P75467"/>
<dbReference type="IntAct" id="P75467">
    <property type="interactions" value="2"/>
</dbReference>
<dbReference type="STRING" id="272634.MPN_314"/>
<dbReference type="EnsemblBacteria" id="AAB96170">
    <property type="protein sequence ID" value="AAB96170"/>
    <property type="gene ID" value="MPN_314"/>
</dbReference>
<dbReference type="GeneID" id="66609030"/>
<dbReference type="KEGG" id="mpn:MPN_314"/>
<dbReference type="PATRIC" id="fig|272634.6.peg.337"/>
<dbReference type="HOGENOM" id="CLU_107907_0_2_14"/>
<dbReference type="OrthoDB" id="9807753at2"/>
<dbReference type="BioCyc" id="MPNE272634:G1GJ3-503-MONOMER"/>
<dbReference type="EvolutionaryTrace" id="P75467"/>
<dbReference type="Proteomes" id="UP000000808">
    <property type="component" value="Chromosome"/>
</dbReference>
<dbReference type="GO" id="GO:0005737">
    <property type="term" value="C:cytoplasm"/>
    <property type="evidence" value="ECO:0007669"/>
    <property type="project" value="UniProtKB-UniRule"/>
</dbReference>
<dbReference type="GO" id="GO:0009295">
    <property type="term" value="C:nucleoid"/>
    <property type="evidence" value="ECO:0007669"/>
    <property type="project" value="UniProtKB-SubCell"/>
</dbReference>
<dbReference type="GO" id="GO:0003700">
    <property type="term" value="F:DNA-binding transcription factor activity"/>
    <property type="evidence" value="ECO:0007669"/>
    <property type="project" value="UniProtKB-UniRule"/>
</dbReference>
<dbReference type="GO" id="GO:0000976">
    <property type="term" value="F:transcription cis-regulatory region binding"/>
    <property type="evidence" value="ECO:0007669"/>
    <property type="project" value="TreeGrafter"/>
</dbReference>
<dbReference type="GO" id="GO:2000143">
    <property type="term" value="P:negative regulation of DNA-templated transcription initiation"/>
    <property type="evidence" value="ECO:0007669"/>
    <property type="project" value="TreeGrafter"/>
</dbReference>
<dbReference type="CDD" id="cd16321">
    <property type="entry name" value="MraZ_C"/>
    <property type="match status" value="1"/>
</dbReference>
<dbReference type="Gene3D" id="3.40.1550.20">
    <property type="entry name" value="Transcriptional regulator MraZ domain"/>
    <property type="match status" value="1"/>
</dbReference>
<dbReference type="HAMAP" id="MF_01008">
    <property type="entry name" value="MraZ"/>
    <property type="match status" value="1"/>
</dbReference>
<dbReference type="InterPro" id="IPR003444">
    <property type="entry name" value="MraZ"/>
</dbReference>
<dbReference type="InterPro" id="IPR035644">
    <property type="entry name" value="MraZ_C"/>
</dbReference>
<dbReference type="InterPro" id="IPR020603">
    <property type="entry name" value="MraZ_dom"/>
</dbReference>
<dbReference type="InterPro" id="IPR038619">
    <property type="entry name" value="MraZ_sf"/>
</dbReference>
<dbReference type="InterPro" id="IPR007159">
    <property type="entry name" value="SpoVT-AbrB_dom"/>
</dbReference>
<dbReference type="InterPro" id="IPR037914">
    <property type="entry name" value="SpoVT-AbrB_sf"/>
</dbReference>
<dbReference type="NCBIfam" id="TIGR00242">
    <property type="entry name" value="division/cell wall cluster transcriptional repressor MraZ"/>
    <property type="match status" value="1"/>
</dbReference>
<dbReference type="PANTHER" id="PTHR34701">
    <property type="entry name" value="TRANSCRIPTIONAL REGULATOR MRAZ"/>
    <property type="match status" value="1"/>
</dbReference>
<dbReference type="PANTHER" id="PTHR34701:SF1">
    <property type="entry name" value="TRANSCRIPTIONAL REGULATOR MRAZ"/>
    <property type="match status" value="1"/>
</dbReference>
<dbReference type="Pfam" id="PF02381">
    <property type="entry name" value="MraZ"/>
    <property type="match status" value="2"/>
</dbReference>
<dbReference type="SUPFAM" id="SSF89447">
    <property type="entry name" value="AbrB/MazE/MraZ-like"/>
    <property type="match status" value="1"/>
</dbReference>
<dbReference type="PROSITE" id="PS51740">
    <property type="entry name" value="SPOVT_ABRB"/>
    <property type="match status" value="2"/>
</dbReference>
<proteinExistence type="evidence at protein level"/>
<comment type="subunit">
    <text evidence="3">Homooctamer. Forms a ring.</text>
</comment>
<comment type="subcellular location">
    <subcellularLocation>
        <location evidence="1">Cytoplasm</location>
        <location evidence="1">Nucleoid</location>
    </subcellularLocation>
</comment>
<comment type="similarity">
    <text evidence="1">Belongs to the MraZ family.</text>
</comment>
<sequence>MLLGTFNITLDAKNRISLPAKLRAFFEGSIVINRGFENCLEVRKPQDFQKYFEQFNSFPSTQKDTRTLKRLIFANANFVDVDTAGRVLIPNNLINDAKLDKEIVLIGQFDHLEIWDKKLYEDYLANSESLETVAERMKDVK</sequence>
<feature type="chain" id="PRO_0000108508" description="Transcriptional regulator MraZ">
    <location>
        <begin position="1"/>
        <end position="141"/>
    </location>
</feature>
<feature type="domain" description="SpoVT-AbrB 1" evidence="2">
    <location>
        <begin position="5"/>
        <end position="47"/>
    </location>
</feature>
<feature type="domain" description="SpoVT-AbrB 2" evidence="2">
    <location>
        <begin position="76"/>
        <end position="119"/>
    </location>
</feature>
<feature type="strand" evidence="4">
    <location>
        <begin position="4"/>
        <end position="8"/>
    </location>
</feature>
<feature type="strand" evidence="4">
    <location>
        <begin position="14"/>
        <end position="17"/>
    </location>
</feature>
<feature type="helix" evidence="4">
    <location>
        <begin position="21"/>
        <end position="25"/>
    </location>
</feature>
<feature type="strand" evidence="4">
    <location>
        <begin position="28"/>
        <end position="31"/>
    </location>
</feature>
<feature type="strand" evidence="4">
    <location>
        <begin position="41"/>
        <end position="43"/>
    </location>
</feature>
<feature type="helix" evidence="4">
    <location>
        <begin position="45"/>
        <end position="55"/>
    </location>
</feature>
<feature type="strand" evidence="4">
    <location>
        <begin position="60"/>
        <end position="62"/>
    </location>
</feature>
<feature type="helix" evidence="4">
    <location>
        <begin position="63"/>
        <end position="73"/>
    </location>
</feature>
<feature type="strand" evidence="4">
    <location>
        <begin position="78"/>
        <end position="80"/>
    </location>
</feature>
<feature type="strand" evidence="4">
    <location>
        <begin position="85"/>
        <end position="88"/>
    </location>
</feature>
<feature type="helix" evidence="4">
    <location>
        <begin position="91"/>
        <end position="96"/>
    </location>
</feature>
<feature type="strand" evidence="4">
    <location>
        <begin position="103"/>
        <end position="107"/>
    </location>
</feature>
<feature type="strand" evidence="4">
    <location>
        <begin position="112"/>
        <end position="116"/>
    </location>
</feature>
<feature type="helix" evidence="4">
    <location>
        <begin position="117"/>
        <end position="125"/>
    </location>
</feature>
<feature type="helix" evidence="4">
    <location>
        <begin position="130"/>
        <end position="135"/>
    </location>
</feature>
<evidence type="ECO:0000255" key="1">
    <source>
        <dbReference type="HAMAP-Rule" id="MF_01008"/>
    </source>
</evidence>
<evidence type="ECO:0000255" key="2">
    <source>
        <dbReference type="PROSITE-ProRule" id="PRU01076"/>
    </source>
</evidence>
<evidence type="ECO:0000269" key="3">
    <source>
    </source>
</evidence>
<evidence type="ECO:0007829" key="4">
    <source>
        <dbReference type="PDB" id="1N0E"/>
    </source>
</evidence>
<reference key="1">
    <citation type="journal article" date="1996" name="Nucleic Acids Res.">
        <title>Complete sequence analysis of the genome of the bacterium Mycoplasma pneumoniae.</title>
        <authorList>
            <person name="Himmelreich R."/>
            <person name="Hilbert H."/>
            <person name="Plagens H."/>
            <person name="Pirkl E."/>
            <person name="Li B.-C."/>
            <person name="Herrmann R."/>
        </authorList>
    </citation>
    <scope>NUCLEOTIDE SEQUENCE [LARGE SCALE GENOMIC DNA]</scope>
    <source>
        <strain>ATCC 29342 / M129 / Subtype 1</strain>
    </source>
</reference>
<reference key="2">
    <citation type="journal article" date="2004" name="Proteins">
        <title>Crystal structure of a protein associated with cell division from Mycoplasma pneumoniae (GI: 13508053): a novel fold with a conserved sequence motif.</title>
        <authorList>
            <person name="Chen S."/>
            <person name="Jancrick J."/>
            <person name="Yokota H."/>
            <person name="Kim R."/>
            <person name="Kim S.-H."/>
        </authorList>
    </citation>
    <scope>X-RAY CRYSTALLOGRAPHY (2.7 ANGSTROMS)</scope>
    <scope>SUBUNIT</scope>
</reference>
<gene>
    <name evidence="1" type="primary">mraZ</name>
    <name type="ordered locus">MPN_314</name>
    <name type="ORF">MP522</name>
</gene>
<name>MRAZ_MYCPN</name>
<organism>
    <name type="scientific">Mycoplasma pneumoniae (strain ATCC 29342 / M129 / Subtype 1)</name>
    <name type="common">Mycoplasmoides pneumoniae</name>
    <dbReference type="NCBI Taxonomy" id="272634"/>
    <lineage>
        <taxon>Bacteria</taxon>
        <taxon>Bacillati</taxon>
        <taxon>Mycoplasmatota</taxon>
        <taxon>Mycoplasmoidales</taxon>
        <taxon>Mycoplasmoidaceae</taxon>
        <taxon>Mycoplasmoides</taxon>
    </lineage>
</organism>
<keyword id="KW-0002">3D-structure</keyword>
<keyword id="KW-0963">Cytoplasm</keyword>
<keyword id="KW-0238">DNA-binding</keyword>
<keyword id="KW-1185">Reference proteome</keyword>
<keyword id="KW-0677">Repeat</keyword>
<keyword id="KW-0804">Transcription</keyword>
<keyword id="KW-0805">Transcription regulation</keyword>